<reference key="1">
    <citation type="journal article" date="1996" name="Gene">
        <title>Sequence analysis and characterization of the hmw gene cluster of Mycoplasma pneumoniae.</title>
        <authorList>
            <person name="Dirksen L.B."/>
            <person name="Proft T."/>
            <person name="Hilbert H."/>
            <person name="Plagens H."/>
            <person name="Herrmann R."/>
            <person name="Krause D.C."/>
        </authorList>
    </citation>
    <scope>NUCLEOTIDE SEQUENCE [GENOMIC DNA]</scope>
    <scope>PROTEIN SEQUENCE OF 1-16</scope>
    <source>
        <strain>ATCC 29342 / M129 / Subtype 1</strain>
    </source>
</reference>
<reference key="2">
    <citation type="journal article" date="1996" name="Nucleic Acids Res.">
        <title>Complete sequence analysis of the genome of the bacterium Mycoplasma pneumoniae.</title>
        <authorList>
            <person name="Himmelreich R."/>
            <person name="Hilbert H."/>
            <person name="Plagens H."/>
            <person name="Pirkl E."/>
            <person name="Li B.-C."/>
            <person name="Herrmann R."/>
        </authorList>
    </citation>
    <scope>NUCLEOTIDE SEQUENCE [LARGE SCALE GENOMIC DNA]</scope>
    <source>
        <strain>ATCC 29342 / M129 / Subtype 1</strain>
    </source>
</reference>
<reference key="3">
    <citation type="journal article" date="1994" name="Mol. Microbiol.">
        <title>Identification and characterization of hitherto unknown Mycoplasma pneumoniae proteins.</title>
        <authorList>
            <person name="Proft T."/>
            <person name="Herrmann R."/>
        </authorList>
    </citation>
    <scope>NUCLEOTIDE SEQUENCE [GENOMIC DNA] OF 127-180</scope>
    <source>
        <strain>ATCC 29342 / M129 / Subtype 1</strain>
    </source>
</reference>
<reference key="4">
    <citation type="journal article" date="1991" name="Gene">
        <title>Juxtaposition of the genes encoding Mycoplasma pneumoniae cytadherence-accessory proteins HMW1 and HMW3.</title>
        <authorList>
            <person name="Krause D.C."/>
            <person name="Lee K.K."/>
        </authorList>
    </citation>
    <scope>PROTEIN SEQUENCE OF 176-182 AND 188-198</scope>
</reference>
<reference key="5">
    <citation type="journal article" date="1995" name="J. Bacteriol.">
        <title>Phosphorylation of Mycoplasma pneumoniae cytadherence-accessory proteins in cell extracts.</title>
        <authorList>
            <person name="Krebes K.A."/>
            <person name="Dirksen L.B."/>
            <person name="Krause D.C."/>
        </authorList>
    </citation>
    <scope>PHOSPHORYLATION</scope>
</reference>
<gene>
    <name type="primary">hmw1</name>
    <name type="ordered locus">MPN_447</name>
    <name type="ORF">MP394</name>
</gene>
<protein>
    <recommendedName>
        <fullName>Cytadherence high molecular weight protein 1</fullName>
    </recommendedName>
    <alternativeName>
        <fullName>Cytadherence accessory protein 1</fullName>
    </alternativeName>
</protein>
<feature type="chain" id="PRO_0000084012" description="Cytadherence high molecular weight protein 1">
    <location>
        <begin position="1"/>
        <end position="1018"/>
    </location>
</feature>
<feature type="coiled-coil region" evidence="2">
    <location>
        <begin position="782"/>
        <end position="815"/>
    </location>
</feature>
<feature type="coiled-coil region" evidence="2">
    <location>
        <begin position="849"/>
        <end position="880"/>
    </location>
</feature>
<feature type="sequence conflict" description="In Ref. 4; AA sequence." evidence="4" ref="4">
    <original>E</original>
    <variation>I</variation>
    <location>
        <position position="198"/>
    </location>
</feature>
<keyword id="KW-1003">Cell membrane</keyword>
<keyword id="KW-0966">Cell projection</keyword>
<keyword id="KW-0175">Coiled coil</keyword>
<keyword id="KW-0200">Cytadherence</keyword>
<keyword id="KW-0903">Direct protein sequencing</keyword>
<keyword id="KW-0472">Membrane</keyword>
<keyword id="KW-0597">Phosphoprotein</keyword>
<keyword id="KW-1185">Reference proteome</keyword>
<keyword id="KW-0843">Virulence</keyword>
<organism>
    <name type="scientific">Mycoplasma pneumoniae (strain ATCC 29342 / M129 / Subtype 1)</name>
    <name type="common">Mycoplasmoides pneumoniae</name>
    <dbReference type="NCBI Taxonomy" id="272634"/>
    <lineage>
        <taxon>Bacteria</taxon>
        <taxon>Bacillati</taxon>
        <taxon>Mycoplasmatota</taxon>
        <taxon>Mycoplasmoidales</taxon>
        <taxon>Mycoplasmoidaceae</taxon>
        <taxon>Mycoplasmoides</taxon>
    </lineage>
</organism>
<accession>Q50365</accession>
<accession>Q50348</accession>
<accession>Q50349</accession>
<accession>Q9R5R4</accession>
<dbReference type="EMBL" id="L38997">
    <property type="protein sequence ID" value="AAA61697.1"/>
    <property type="molecule type" value="Genomic_DNA"/>
</dbReference>
<dbReference type="EMBL" id="U00089">
    <property type="protein sequence ID" value="AAB96042.1"/>
    <property type="molecule type" value="Genomic_DNA"/>
</dbReference>
<dbReference type="EMBL" id="Z32661">
    <property type="protein sequence ID" value="CAA83580.1"/>
    <property type="molecule type" value="Genomic_DNA"/>
</dbReference>
<dbReference type="EMBL" id="Z32662">
    <property type="protein sequence ID" value="CAA83581.1"/>
    <property type="molecule type" value="Genomic_DNA"/>
</dbReference>
<dbReference type="PIR" id="S73720">
    <property type="entry name" value="S73720"/>
</dbReference>
<dbReference type="RefSeq" id="NP_110135.1">
    <property type="nucleotide sequence ID" value="NC_000912.1"/>
</dbReference>
<dbReference type="RefSeq" id="WP_010874803.1">
    <property type="nucleotide sequence ID" value="NZ_OU342337.1"/>
</dbReference>
<dbReference type="SMR" id="Q50365"/>
<dbReference type="IntAct" id="Q50365">
    <property type="interactions" value="1"/>
</dbReference>
<dbReference type="STRING" id="272634.MPN_447"/>
<dbReference type="EnsemblBacteria" id="AAB96042">
    <property type="protein sequence ID" value="AAB96042"/>
    <property type="gene ID" value="MPN_447"/>
</dbReference>
<dbReference type="KEGG" id="mpn:MPN_447"/>
<dbReference type="PATRIC" id="fig|272634.6.peg.483"/>
<dbReference type="HOGENOM" id="CLU_296444_0_0_14"/>
<dbReference type="OrthoDB" id="401460at2"/>
<dbReference type="BioCyc" id="MPNE272634:G1GJ3-720-MONOMER"/>
<dbReference type="Proteomes" id="UP000000808">
    <property type="component" value="Chromosome"/>
</dbReference>
<dbReference type="GO" id="GO:0033111">
    <property type="term" value="C:attachment organelle membrane"/>
    <property type="evidence" value="ECO:0007669"/>
    <property type="project" value="UniProtKB-SubCell"/>
</dbReference>
<dbReference type="GO" id="GO:0042995">
    <property type="term" value="C:cell projection"/>
    <property type="evidence" value="ECO:0007669"/>
    <property type="project" value="UniProtKB-KW"/>
</dbReference>
<dbReference type="GO" id="GO:0005886">
    <property type="term" value="C:plasma membrane"/>
    <property type="evidence" value="ECO:0007669"/>
    <property type="project" value="UniProtKB-KW"/>
</dbReference>
<dbReference type="GO" id="GO:0020035">
    <property type="term" value="P:adhesion of symbiont to microvasculature"/>
    <property type="evidence" value="ECO:0007669"/>
    <property type="project" value="UniProtKB-KW"/>
</dbReference>
<dbReference type="Gene3D" id="3.30.70.3600">
    <property type="match status" value="1"/>
</dbReference>
<dbReference type="InterPro" id="IPR021199">
    <property type="entry name" value="Cytadherence_HMW-1_N"/>
</dbReference>
<dbReference type="InterPro" id="IPR022466">
    <property type="entry name" value="EAGR_box"/>
</dbReference>
<dbReference type="InterPro" id="IPR038145">
    <property type="entry name" value="EAGR_sf"/>
</dbReference>
<dbReference type="NCBIfam" id="TIGR03834">
    <property type="entry name" value="EAGR_box"/>
    <property type="match status" value="1"/>
</dbReference>
<dbReference type="NCBIfam" id="TIGR03836">
    <property type="entry name" value="termin_org_HMW1"/>
    <property type="match status" value="1"/>
</dbReference>
<dbReference type="Pfam" id="PF16713">
    <property type="entry name" value="EAGR_box"/>
    <property type="match status" value="1"/>
</dbReference>
<name>HMW1_MYCPN</name>
<comment type="function">
    <text evidence="1">Component of the cytoskeleton-like structure which stabilizes the shape of the wall-less Mycoplasma. This cytoskeleton-like network of accessory proteins containing HMW proteins 1 to 5 allows the proper anchoring of cytadhesin proteins in the mycoplasmal membrane at the attachment organelle (By similarity).</text>
</comment>
<comment type="subcellular location">
    <subcellularLocation>
        <location>Cell projection</location>
        <location>Attachment organelle membrane</location>
    </subcellularLocation>
    <text>Localizes specifically to the attachment membrane.</text>
</comment>
<comment type="PTM">
    <text evidence="3">Phosphorylated mainly on serine residues.</text>
</comment>
<sequence length="1018" mass="112215">MKKSKEAVFEDKDYTEENPEQIFGNLYDGKLTVQDGKVKIAYDGDGNGYYIAFNSETGVYYDPYGDTEYDISVLFDANGNSFVFADAPTVEVLAGEQEQTEAEPDYLQYVGNEAYGYYDEAGEWVWSGYFEGDQWISTLPQTEAEEKQFGFEDNIETTPTASEDFGLEADVPAPEVAEPSYEVQPEVAAEPVYDVQPEVAVEPVGETTATVEPQAVEIQPEVVVEPIVESQLEQPVEVQAEMVQPEVAVEPQLEVSLDPIGETAPILEQVEPQAVQTQPEIPAEQSAVELQPEPVAEVQSEMVQPEAAAEPVTEAQQTEPTPVVETIAEITPQVVTEPVVAVVEHQPEAVAEPLPVEPAVAGVSELIPTEQVQPEVVVESTPVAEVQSEMVQPEVAVEPIVEPQPEQPVEVQPEVITTPEVASVLEVQPENPVVEVEQVVEPQPETPVEVQPEPVVETVQEAVAEPTQVVEPQPQAAPQPAVYEWNLTPEAAPVEQPEVIPVTVVESQATATAEPQPAVAPVADMDYVLHLTDTVKNQPQTAPVQPTTPIKIEVAESTPTVTTSPVEPTIAPPLFEIELNNTTSSDLPLVEVVDFKHNQHGAVGTHSFDDFTPPEVGMESKTHCHSNSEVVWRVSEPKTVPVPPAVSSINIQTVNRVVEPTISTPTTPVVESAPAIEIFVDTPPVETKEASSNVDVVQQPVKPLMPVMVEQLRTTELQPTTEINLFANSDINSIIAELKQGRSNPAINFDDIFKMSSYQMVVKKSFVQISDFITNSKTDITNRFLLIKKELQAELTRLIEENEQLKAEFLNAKDLSVYQKDELLRSLSNDFTIAHRPSDSYEQLQKSGELVRNIQKAILENESKIKNIQITLKELKAVYKLCSDTVLNGMAKLDSVLRFNKKEKDPLLLNSMETLSSFETEPQAIIEDLLDFSSSFDKMSNEQLDEFVYQNLDSGLNLDLDGFDHQLSSMNIHGLEPLDPMKLDDFDFETLTPDKTSNLSSILDDELMENGGDFNLDY</sequence>
<evidence type="ECO:0000250" key="1"/>
<evidence type="ECO:0000255" key="2"/>
<evidence type="ECO:0000269" key="3">
    <source>
    </source>
</evidence>
<evidence type="ECO:0000305" key="4"/>
<proteinExistence type="evidence at protein level"/>